<gene>
    <name evidence="1" type="primary">rimO</name>
    <name type="ordered locus">AZOSEA26760</name>
    <name type="ORF">ebA4733</name>
</gene>
<dbReference type="EC" id="2.8.4.4" evidence="1"/>
<dbReference type="EMBL" id="CR555306">
    <property type="protein sequence ID" value="CAI08801.1"/>
    <property type="molecule type" value="Genomic_DNA"/>
</dbReference>
<dbReference type="RefSeq" id="WP_011238484.1">
    <property type="nucleotide sequence ID" value="NC_006513.1"/>
</dbReference>
<dbReference type="SMR" id="Q5P1L3"/>
<dbReference type="STRING" id="76114.ebA4733"/>
<dbReference type="KEGG" id="eba:ebA4733"/>
<dbReference type="eggNOG" id="COG0621">
    <property type="taxonomic scope" value="Bacteria"/>
</dbReference>
<dbReference type="HOGENOM" id="CLU_018697_0_0_4"/>
<dbReference type="OrthoDB" id="9805215at2"/>
<dbReference type="Proteomes" id="UP000006552">
    <property type="component" value="Chromosome"/>
</dbReference>
<dbReference type="GO" id="GO:0005829">
    <property type="term" value="C:cytosol"/>
    <property type="evidence" value="ECO:0007669"/>
    <property type="project" value="TreeGrafter"/>
</dbReference>
<dbReference type="GO" id="GO:0051539">
    <property type="term" value="F:4 iron, 4 sulfur cluster binding"/>
    <property type="evidence" value="ECO:0007669"/>
    <property type="project" value="UniProtKB-UniRule"/>
</dbReference>
<dbReference type="GO" id="GO:0035599">
    <property type="term" value="F:aspartic acid methylthiotransferase activity"/>
    <property type="evidence" value="ECO:0007669"/>
    <property type="project" value="TreeGrafter"/>
</dbReference>
<dbReference type="GO" id="GO:0046872">
    <property type="term" value="F:metal ion binding"/>
    <property type="evidence" value="ECO:0007669"/>
    <property type="project" value="UniProtKB-KW"/>
</dbReference>
<dbReference type="GO" id="GO:0103039">
    <property type="term" value="F:protein methylthiotransferase activity"/>
    <property type="evidence" value="ECO:0007669"/>
    <property type="project" value="UniProtKB-EC"/>
</dbReference>
<dbReference type="GO" id="GO:0006400">
    <property type="term" value="P:tRNA modification"/>
    <property type="evidence" value="ECO:0007669"/>
    <property type="project" value="InterPro"/>
</dbReference>
<dbReference type="CDD" id="cd01335">
    <property type="entry name" value="Radical_SAM"/>
    <property type="match status" value="1"/>
</dbReference>
<dbReference type="FunFam" id="3.40.50.12160:FF:000002">
    <property type="entry name" value="Ribosomal protein S12 methylthiotransferase RimO"/>
    <property type="match status" value="1"/>
</dbReference>
<dbReference type="FunFam" id="3.80.30.20:FF:000001">
    <property type="entry name" value="tRNA-2-methylthio-N(6)-dimethylallyladenosine synthase 2"/>
    <property type="match status" value="1"/>
</dbReference>
<dbReference type="Gene3D" id="3.40.50.12160">
    <property type="entry name" value="Methylthiotransferase, N-terminal domain"/>
    <property type="match status" value="1"/>
</dbReference>
<dbReference type="Gene3D" id="2.40.50.140">
    <property type="entry name" value="Nucleic acid-binding proteins"/>
    <property type="match status" value="1"/>
</dbReference>
<dbReference type="Gene3D" id="3.80.30.20">
    <property type="entry name" value="tm_1862 like domain"/>
    <property type="match status" value="1"/>
</dbReference>
<dbReference type="HAMAP" id="MF_01865">
    <property type="entry name" value="MTTase_RimO"/>
    <property type="match status" value="1"/>
</dbReference>
<dbReference type="InterPro" id="IPR006638">
    <property type="entry name" value="Elp3/MiaA/NifB-like_rSAM"/>
</dbReference>
<dbReference type="InterPro" id="IPR005839">
    <property type="entry name" value="Methylthiotransferase"/>
</dbReference>
<dbReference type="InterPro" id="IPR020612">
    <property type="entry name" value="Methylthiotransferase_CS"/>
</dbReference>
<dbReference type="InterPro" id="IPR013848">
    <property type="entry name" value="Methylthiotransferase_N"/>
</dbReference>
<dbReference type="InterPro" id="IPR038135">
    <property type="entry name" value="Methylthiotransferase_N_sf"/>
</dbReference>
<dbReference type="InterPro" id="IPR012340">
    <property type="entry name" value="NA-bd_OB-fold"/>
</dbReference>
<dbReference type="InterPro" id="IPR005840">
    <property type="entry name" value="Ribosomal_uS12_MeSTrfase_RimO"/>
</dbReference>
<dbReference type="InterPro" id="IPR007197">
    <property type="entry name" value="rSAM"/>
</dbReference>
<dbReference type="InterPro" id="IPR023404">
    <property type="entry name" value="rSAM_horseshoe"/>
</dbReference>
<dbReference type="InterPro" id="IPR002792">
    <property type="entry name" value="TRAM_dom"/>
</dbReference>
<dbReference type="NCBIfam" id="TIGR01125">
    <property type="entry name" value="30S ribosomal protein S12 methylthiotransferase RimO"/>
    <property type="match status" value="1"/>
</dbReference>
<dbReference type="NCBIfam" id="TIGR00089">
    <property type="entry name" value="MiaB/RimO family radical SAM methylthiotransferase"/>
    <property type="match status" value="1"/>
</dbReference>
<dbReference type="PANTHER" id="PTHR43837">
    <property type="entry name" value="RIBOSOMAL PROTEIN S12 METHYLTHIOTRANSFERASE RIMO"/>
    <property type="match status" value="1"/>
</dbReference>
<dbReference type="PANTHER" id="PTHR43837:SF1">
    <property type="entry name" value="RIBOSOMAL PROTEIN US12 METHYLTHIOTRANSFERASE RIMO"/>
    <property type="match status" value="1"/>
</dbReference>
<dbReference type="Pfam" id="PF04055">
    <property type="entry name" value="Radical_SAM"/>
    <property type="match status" value="1"/>
</dbReference>
<dbReference type="Pfam" id="PF18693">
    <property type="entry name" value="TRAM_2"/>
    <property type="match status" value="1"/>
</dbReference>
<dbReference type="Pfam" id="PF00919">
    <property type="entry name" value="UPF0004"/>
    <property type="match status" value="1"/>
</dbReference>
<dbReference type="SFLD" id="SFLDG01082">
    <property type="entry name" value="B12-binding_domain_containing"/>
    <property type="match status" value="1"/>
</dbReference>
<dbReference type="SFLD" id="SFLDG01061">
    <property type="entry name" value="methylthiotransferase"/>
    <property type="match status" value="1"/>
</dbReference>
<dbReference type="SFLD" id="SFLDF00274">
    <property type="entry name" value="ribosomal_protein_S12_methylth"/>
    <property type="match status" value="1"/>
</dbReference>
<dbReference type="SMART" id="SM00729">
    <property type="entry name" value="Elp3"/>
    <property type="match status" value="1"/>
</dbReference>
<dbReference type="SUPFAM" id="SSF102114">
    <property type="entry name" value="Radical SAM enzymes"/>
    <property type="match status" value="1"/>
</dbReference>
<dbReference type="PROSITE" id="PS51449">
    <property type="entry name" value="MTTASE_N"/>
    <property type="match status" value="1"/>
</dbReference>
<dbReference type="PROSITE" id="PS01278">
    <property type="entry name" value="MTTASE_RADICAL"/>
    <property type="match status" value="1"/>
</dbReference>
<dbReference type="PROSITE" id="PS51918">
    <property type="entry name" value="RADICAL_SAM"/>
    <property type="match status" value="1"/>
</dbReference>
<dbReference type="PROSITE" id="PS50926">
    <property type="entry name" value="TRAM"/>
    <property type="match status" value="1"/>
</dbReference>
<feature type="chain" id="PRO_0000374703" description="Ribosomal protein uS12 methylthiotransferase RimO">
    <location>
        <begin position="1"/>
        <end position="443"/>
    </location>
</feature>
<feature type="domain" description="MTTase N-terminal" evidence="1">
    <location>
        <begin position="10"/>
        <end position="120"/>
    </location>
</feature>
<feature type="domain" description="Radical SAM core" evidence="2">
    <location>
        <begin position="137"/>
        <end position="375"/>
    </location>
</feature>
<feature type="domain" description="TRAM" evidence="1">
    <location>
        <begin position="377"/>
        <end position="443"/>
    </location>
</feature>
<feature type="binding site" evidence="1">
    <location>
        <position position="19"/>
    </location>
    <ligand>
        <name>[4Fe-4S] cluster</name>
        <dbReference type="ChEBI" id="CHEBI:49883"/>
        <label>1</label>
    </ligand>
</feature>
<feature type="binding site" evidence="1">
    <location>
        <position position="55"/>
    </location>
    <ligand>
        <name>[4Fe-4S] cluster</name>
        <dbReference type="ChEBI" id="CHEBI:49883"/>
        <label>1</label>
    </ligand>
</feature>
<feature type="binding site" evidence="1">
    <location>
        <position position="84"/>
    </location>
    <ligand>
        <name>[4Fe-4S] cluster</name>
        <dbReference type="ChEBI" id="CHEBI:49883"/>
        <label>1</label>
    </ligand>
</feature>
<feature type="binding site" evidence="1">
    <location>
        <position position="151"/>
    </location>
    <ligand>
        <name>[4Fe-4S] cluster</name>
        <dbReference type="ChEBI" id="CHEBI:49883"/>
        <label>2</label>
        <note>4Fe-4S-S-AdoMet</note>
    </ligand>
</feature>
<feature type="binding site" evidence="1">
    <location>
        <position position="155"/>
    </location>
    <ligand>
        <name>[4Fe-4S] cluster</name>
        <dbReference type="ChEBI" id="CHEBI:49883"/>
        <label>2</label>
        <note>4Fe-4S-S-AdoMet</note>
    </ligand>
</feature>
<feature type="binding site" evidence="1">
    <location>
        <position position="158"/>
    </location>
    <ligand>
        <name>[4Fe-4S] cluster</name>
        <dbReference type="ChEBI" id="CHEBI:49883"/>
        <label>2</label>
        <note>4Fe-4S-S-AdoMet</note>
    </ligand>
</feature>
<keyword id="KW-0004">4Fe-4S</keyword>
<keyword id="KW-0963">Cytoplasm</keyword>
<keyword id="KW-0408">Iron</keyword>
<keyword id="KW-0411">Iron-sulfur</keyword>
<keyword id="KW-0479">Metal-binding</keyword>
<keyword id="KW-1185">Reference proteome</keyword>
<keyword id="KW-0949">S-adenosyl-L-methionine</keyword>
<keyword id="KW-0808">Transferase</keyword>
<evidence type="ECO:0000255" key="1">
    <source>
        <dbReference type="HAMAP-Rule" id="MF_01865"/>
    </source>
</evidence>
<evidence type="ECO:0000255" key="2">
    <source>
        <dbReference type="PROSITE-ProRule" id="PRU01266"/>
    </source>
</evidence>
<reference key="1">
    <citation type="journal article" date="2005" name="Arch. Microbiol.">
        <title>The genome sequence of an anaerobic aromatic-degrading denitrifying bacterium, strain EbN1.</title>
        <authorList>
            <person name="Rabus R."/>
            <person name="Kube M."/>
            <person name="Heider J."/>
            <person name="Beck A."/>
            <person name="Heitmann K."/>
            <person name="Widdel F."/>
            <person name="Reinhardt R."/>
        </authorList>
    </citation>
    <scope>NUCLEOTIDE SEQUENCE [LARGE SCALE GENOMIC DNA]</scope>
    <source>
        <strain>DSM 19018 / LMG 30748 / EbN1</strain>
    </source>
</reference>
<sequence>MTQQKSQRVPRVGFVSLGCPKATVDSEHILTRLRAEGYDLSGSYDDADLVVVNTCGFIDAAVEESLDAIGEALAENGKVIVTGCLGAKDDVILAAHPQVLAVTGPHATDAVVKAVHQHLPKPHDPFTDLIPPQGIRLTPAHYAYLKISEGCNHRCSFCIIPSMRGDLVSRPVHDVMREAESLVDSGVKELLVISQDTSAYGVDMKYRTGFWNGRPLKTRLIDLAKALGELGVWVRMHYVYPYPSVDELIPLMAEGKILPYLDVPFQHASPRILKAMKRPGNVENVLERIRKWRSICPDLTIRSTFITGFPGETDEDFEQLLRFLEEAQLDRVGAFAYSPVEGAAANLLADPVPDEVREERRMRLMDFQEDISTQRLERWIGRDITVLVEEVDDEGAVARSGSDAPEVDGLVIIPDGDGLVPGEFAKVRVTDCDVHDLYARPLP</sequence>
<name>RIMO_AROAE</name>
<protein>
    <recommendedName>
        <fullName evidence="1">Ribosomal protein uS12 methylthiotransferase RimO</fullName>
        <shortName evidence="1">uS12 MTTase</shortName>
        <shortName evidence="1">uS12 methylthiotransferase</shortName>
        <ecNumber evidence="1">2.8.4.4</ecNumber>
    </recommendedName>
    <alternativeName>
        <fullName evidence="1">Ribosomal protein uS12 (aspartate-C(3))-methylthiotransferase</fullName>
    </alternativeName>
    <alternativeName>
        <fullName evidence="1">Ribosome maturation factor RimO</fullName>
    </alternativeName>
</protein>
<accession>Q5P1L3</accession>
<comment type="function">
    <text evidence="1">Catalyzes the methylthiolation of an aspartic acid residue of ribosomal protein uS12.</text>
</comment>
<comment type="catalytic activity">
    <reaction evidence="1">
        <text>L-aspartate(89)-[ribosomal protein uS12]-hydrogen + (sulfur carrier)-SH + AH2 + 2 S-adenosyl-L-methionine = 3-methylsulfanyl-L-aspartate(89)-[ribosomal protein uS12]-hydrogen + (sulfur carrier)-H + 5'-deoxyadenosine + L-methionine + A + S-adenosyl-L-homocysteine + 2 H(+)</text>
        <dbReference type="Rhea" id="RHEA:37087"/>
        <dbReference type="Rhea" id="RHEA-COMP:10460"/>
        <dbReference type="Rhea" id="RHEA-COMP:10461"/>
        <dbReference type="Rhea" id="RHEA-COMP:14737"/>
        <dbReference type="Rhea" id="RHEA-COMP:14739"/>
        <dbReference type="ChEBI" id="CHEBI:13193"/>
        <dbReference type="ChEBI" id="CHEBI:15378"/>
        <dbReference type="ChEBI" id="CHEBI:17319"/>
        <dbReference type="ChEBI" id="CHEBI:17499"/>
        <dbReference type="ChEBI" id="CHEBI:29917"/>
        <dbReference type="ChEBI" id="CHEBI:29961"/>
        <dbReference type="ChEBI" id="CHEBI:57844"/>
        <dbReference type="ChEBI" id="CHEBI:57856"/>
        <dbReference type="ChEBI" id="CHEBI:59789"/>
        <dbReference type="ChEBI" id="CHEBI:64428"/>
        <dbReference type="ChEBI" id="CHEBI:73599"/>
        <dbReference type="EC" id="2.8.4.4"/>
    </reaction>
</comment>
<comment type="cofactor">
    <cofactor evidence="1">
        <name>[4Fe-4S] cluster</name>
        <dbReference type="ChEBI" id="CHEBI:49883"/>
    </cofactor>
    <text evidence="1">Binds 2 [4Fe-4S] clusters. One cluster is coordinated with 3 cysteines and an exchangeable S-adenosyl-L-methionine.</text>
</comment>
<comment type="subcellular location">
    <subcellularLocation>
        <location evidence="1">Cytoplasm</location>
    </subcellularLocation>
</comment>
<comment type="similarity">
    <text evidence="1">Belongs to the methylthiotransferase family. RimO subfamily.</text>
</comment>
<proteinExistence type="inferred from homology"/>
<organism>
    <name type="scientific">Aromatoleum aromaticum (strain DSM 19018 / LMG 30748 / EbN1)</name>
    <name type="common">Azoarcus sp. (strain EbN1)</name>
    <dbReference type="NCBI Taxonomy" id="76114"/>
    <lineage>
        <taxon>Bacteria</taxon>
        <taxon>Pseudomonadati</taxon>
        <taxon>Pseudomonadota</taxon>
        <taxon>Betaproteobacteria</taxon>
        <taxon>Rhodocyclales</taxon>
        <taxon>Rhodocyclaceae</taxon>
        <taxon>Aromatoleum</taxon>
    </lineage>
</organism>